<accession>B7MBY7</accession>
<comment type="function">
    <text evidence="1">Catalyzes the reversible aldol cleavage of N-acetylneuraminic acid (sialic acid; Neu5Ac) to form pyruvate and N-acetylmannosamine (ManNAc) via a Schiff base intermediate.</text>
</comment>
<comment type="catalytic activity">
    <reaction evidence="1">
        <text>aceneuramate = aldehydo-N-acetyl-D-mannosamine + pyruvate</text>
        <dbReference type="Rhea" id="RHEA:23296"/>
        <dbReference type="ChEBI" id="CHEBI:15361"/>
        <dbReference type="ChEBI" id="CHEBI:17122"/>
        <dbReference type="ChEBI" id="CHEBI:173083"/>
        <dbReference type="EC" id="4.1.3.3"/>
    </reaction>
</comment>
<comment type="pathway">
    <text evidence="1">Amino-sugar metabolism; N-acetylneuraminate degradation; D-fructose 6-phosphate from N-acetylneuraminate: step 1/5.</text>
</comment>
<comment type="subunit">
    <text evidence="1">Homotetramer.</text>
</comment>
<comment type="subcellular location">
    <subcellularLocation>
        <location evidence="1">Cytoplasm</location>
    </subcellularLocation>
</comment>
<comment type="similarity">
    <text evidence="1">Belongs to the DapA family. NanA subfamily.</text>
</comment>
<name>NANA_ECO45</name>
<reference key="1">
    <citation type="journal article" date="2009" name="PLoS Genet.">
        <title>Organised genome dynamics in the Escherichia coli species results in highly diverse adaptive paths.</title>
        <authorList>
            <person name="Touchon M."/>
            <person name="Hoede C."/>
            <person name="Tenaillon O."/>
            <person name="Barbe V."/>
            <person name="Baeriswyl S."/>
            <person name="Bidet P."/>
            <person name="Bingen E."/>
            <person name="Bonacorsi S."/>
            <person name="Bouchier C."/>
            <person name="Bouvet O."/>
            <person name="Calteau A."/>
            <person name="Chiapello H."/>
            <person name="Clermont O."/>
            <person name="Cruveiller S."/>
            <person name="Danchin A."/>
            <person name="Diard M."/>
            <person name="Dossat C."/>
            <person name="Karoui M.E."/>
            <person name="Frapy E."/>
            <person name="Garry L."/>
            <person name="Ghigo J.M."/>
            <person name="Gilles A.M."/>
            <person name="Johnson J."/>
            <person name="Le Bouguenec C."/>
            <person name="Lescat M."/>
            <person name="Mangenot S."/>
            <person name="Martinez-Jehanne V."/>
            <person name="Matic I."/>
            <person name="Nassif X."/>
            <person name="Oztas S."/>
            <person name="Petit M.A."/>
            <person name="Pichon C."/>
            <person name="Rouy Z."/>
            <person name="Ruf C.S."/>
            <person name="Schneider D."/>
            <person name="Tourret J."/>
            <person name="Vacherie B."/>
            <person name="Vallenet D."/>
            <person name="Medigue C."/>
            <person name="Rocha E.P.C."/>
            <person name="Denamur E."/>
        </authorList>
    </citation>
    <scope>NUCLEOTIDE SEQUENCE [LARGE SCALE GENOMIC DNA]</scope>
    <source>
        <strain>S88 / ExPEC</strain>
    </source>
</reference>
<gene>
    <name evidence="1" type="primary">nanA</name>
    <name type="ordered locus">ECS88_3602</name>
</gene>
<proteinExistence type="inferred from homology"/>
<organism>
    <name type="scientific">Escherichia coli O45:K1 (strain S88 / ExPEC)</name>
    <dbReference type="NCBI Taxonomy" id="585035"/>
    <lineage>
        <taxon>Bacteria</taxon>
        <taxon>Pseudomonadati</taxon>
        <taxon>Pseudomonadota</taxon>
        <taxon>Gammaproteobacteria</taxon>
        <taxon>Enterobacterales</taxon>
        <taxon>Enterobacteriaceae</taxon>
        <taxon>Escherichia</taxon>
    </lineage>
</organism>
<keyword id="KW-0119">Carbohydrate metabolism</keyword>
<keyword id="KW-0963">Cytoplasm</keyword>
<keyword id="KW-0456">Lyase</keyword>
<keyword id="KW-1185">Reference proteome</keyword>
<keyword id="KW-0704">Schiff base</keyword>
<dbReference type="EC" id="4.1.3.3" evidence="1"/>
<dbReference type="EMBL" id="CU928161">
    <property type="protein sequence ID" value="CAR04828.1"/>
    <property type="molecule type" value="Genomic_DNA"/>
</dbReference>
<dbReference type="RefSeq" id="WP_000224714.1">
    <property type="nucleotide sequence ID" value="NC_011742.1"/>
</dbReference>
<dbReference type="SMR" id="B7MBY7"/>
<dbReference type="GeneID" id="93778761"/>
<dbReference type="KEGG" id="ecz:ECS88_3602"/>
<dbReference type="HOGENOM" id="CLU_049343_6_0_6"/>
<dbReference type="UniPathway" id="UPA00629">
    <property type="reaction ID" value="UER00680"/>
</dbReference>
<dbReference type="Proteomes" id="UP000000747">
    <property type="component" value="Chromosome"/>
</dbReference>
<dbReference type="GO" id="GO:0005829">
    <property type="term" value="C:cytosol"/>
    <property type="evidence" value="ECO:0007669"/>
    <property type="project" value="TreeGrafter"/>
</dbReference>
<dbReference type="GO" id="GO:0008747">
    <property type="term" value="F:N-acetylneuraminate lyase activity"/>
    <property type="evidence" value="ECO:0007669"/>
    <property type="project" value="UniProtKB-UniRule"/>
</dbReference>
<dbReference type="GO" id="GO:0005975">
    <property type="term" value="P:carbohydrate metabolic process"/>
    <property type="evidence" value="ECO:0007669"/>
    <property type="project" value="UniProtKB-UniRule"/>
</dbReference>
<dbReference type="GO" id="GO:0019262">
    <property type="term" value="P:N-acetylneuraminate catabolic process"/>
    <property type="evidence" value="ECO:0007669"/>
    <property type="project" value="UniProtKB-UniRule"/>
</dbReference>
<dbReference type="CDD" id="cd00954">
    <property type="entry name" value="NAL"/>
    <property type="match status" value="1"/>
</dbReference>
<dbReference type="FunFam" id="3.20.20.70:FF:000039">
    <property type="entry name" value="N-acetylneuraminate lyase"/>
    <property type="match status" value="1"/>
</dbReference>
<dbReference type="Gene3D" id="3.20.20.70">
    <property type="entry name" value="Aldolase class I"/>
    <property type="match status" value="1"/>
</dbReference>
<dbReference type="HAMAP" id="MF_01237">
    <property type="entry name" value="N_acetylneuram_lyase"/>
    <property type="match status" value="1"/>
</dbReference>
<dbReference type="InterPro" id="IPR013785">
    <property type="entry name" value="Aldolase_TIM"/>
</dbReference>
<dbReference type="InterPro" id="IPR002220">
    <property type="entry name" value="DapA-like"/>
</dbReference>
<dbReference type="InterPro" id="IPR005264">
    <property type="entry name" value="NanA"/>
</dbReference>
<dbReference type="InterPro" id="IPR020625">
    <property type="entry name" value="Schiff_base-form_aldolases_AS"/>
</dbReference>
<dbReference type="InterPro" id="IPR020624">
    <property type="entry name" value="Schiff_base-form_aldolases_CS"/>
</dbReference>
<dbReference type="NCBIfam" id="TIGR00683">
    <property type="entry name" value="nanA"/>
    <property type="match status" value="1"/>
</dbReference>
<dbReference type="NCBIfam" id="NF003164">
    <property type="entry name" value="PRK04147.1"/>
    <property type="match status" value="1"/>
</dbReference>
<dbReference type="PANTHER" id="PTHR42849">
    <property type="entry name" value="N-ACETYLNEURAMINATE LYASE"/>
    <property type="match status" value="1"/>
</dbReference>
<dbReference type="PANTHER" id="PTHR42849:SF1">
    <property type="entry name" value="N-ACETYLNEURAMINATE LYASE"/>
    <property type="match status" value="1"/>
</dbReference>
<dbReference type="Pfam" id="PF00701">
    <property type="entry name" value="DHDPS"/>
    <property type="match status" value="1"/>
</dbReference>
<dbReference type="PIRSF" id="PIRSF001365">
    <property type="entry name" value="DHDPS"/>
    <property type="match status" value="1"/>
</dbReference>
<dbReference type="PRINTS" id="PR00146">
    <property type="entry name" value="DHPICSNTHASE"/>
</dbReference>
<dbReference type="SMART" id="SM01130">
    <property type="entry name" value="DHDPS"/>
    <property type="match status" value="1"/>
</dbReference>
<dbReference type="SUPFAM" id="SSF51569">
    <property type="entry name" value="Aldolase"/>
    <property type="match status" value="1"/>
</dbReference>
<dbReference type="PROSITE" id="PS00665">
    <property type="entry name" value="DHDPS_1"/>
    <property type="match status" value="1"/>
</dbReference>
<dbReference type="PROSITE" id="PS00666">
    <property type="entry name" value="DHDPS_2"/>
    <property type="match status" value="1"/>
</dbReference>
<evidence type="ECO:0000255" key="1">
    <source>
        <dbReference type="HAMAP-Rule" id="MF_01237"/>
    </source>
</evidence>
<sequence>MATNLRGVMAALLTPFDQQQALDKASLRRLVQFNIQQGIDGLYVGGSTGEAFVQSLSEREQVLEIVAEEAKGKIKLIAHVGCVSTAESQQLAASAKRYGFDAVSAVTPFYYPFSFEEHCDHYRAIIDSADGLPMVVYNIPALSGVKLTLDQINTLVTLPGVGALKQTSGDLYQMEQIRREHPDLVLYNGYDEIFASGLLAGADGGIGSTYNIMGWRYQGIVKALKEGDIQTAQKLQTECNKVIDLLIKTGVFRGLKTVLHYMDVVSVPLCRKPFGPVDEKYLPELKALAQQLMQERG</sequence>
<feature type="chain" id="PRO_1000139730" description="N-acetylneuraminate lyase">
    <location>
        <begin position="1"/>
        <end position="297"/>
    </location>
</feature>
<feature type="active site" description="Proton donor" evidence="1">
    <location>
        <position position="137"/>
    </location>
</feature>
<feature type="active site" description="Schiff-base intermediate with substrate" evidence="1">
    <location>
        <position position="165"/>
    </location>
</feature>
<feature type="binding site" evidence="1">
    <location>
        <position position="47"/>
    </location>
    <ligand>
        <name>aceneuramate</name>
        <dbReference type="ChEBI" id="CHEBI:173083"/>
    </ligand>
</feature>
<feature type="binding site" evidence="1">
    <location>
        <position position="48"/>
    </location>
    <ligand>
        <name>aceneuramate</name>
        <dbReference type="ChEBI" id="CHEBI:173083"/>
    </ligand>
</feature>
<feature type="binding site" evidence="1">
    <location>
        <position position="167"/>
    </location>
    <ligand>
        <name>aceneuramate</name>
        <dbReference type="ChEBI" id="CHEBI:173083"/>
    </ligand>
</feature>
<feature type="binding site" evidence="1">
    <location>
        <position position="189"/>
    </location>
    <ligand>
        <name>aceneuramate</name>
        <dbReference type="ChEBI" id="CHEBI:173083"/>
    </ligand>
</feature>
<feature type="binding site" evidence="1">
    <location>
        <position position="191"/>
    </location>
    <ligand>
        <name>aceneuramate</name>
        <dbReference type="ChEBI" id="CHEBI:173083"/>
    </ligand>
</feature>
<feature type="binding site" evidence="1">
    <location>
        <position position="192"/>
    </location>
    <ligand>
        <name>aceneuramate</name>
        <dbReference type="ChEBI" id="CHEBI:173083"/>
    </ligand>
</feature>
<feature type="binding site" evidence="1">
    <location>
        <position position="208"/>
    </location>
    <ligand>
        <name>aceneuramate</name>
        <dbReference type="ChEBI" id="CHEBI:173083"/>
    </ligand>
</feature>
<protein>
    <recommendedName>
        <fullName evidence="1">N-acetylneuraminate lyase</fullName>
        <shortName evidence="1">NAL</shortName>
        <shortName evidence="1">Neu5Ac lyase</shortName>
        <ecNumber evidence="1">4.1.3.3</ecNumber>
    </recommendedName>
    <alternativeName>
        <fullName evidence="1">N-acetylneuraminate pyruvate-lyase</fullName>
    </alternativeName>
    <alternativeName>
        <fullName evidence="1">N-acetylneuraminic acid aldolase</fullName>
    </alternativeName>
    <alternativeName>
        <fullName evidence="1">Sialate lyase</fullName>
    </alternativeName>
    <alternativeName>
        <fullName evidence="1">Sialic acid aldolase</fullName>
    </alternativeName>
    <alternativeName>
        <fullName evidence="1">Sialic acid lyase</fullName>
    </alternativeName>
</protein>